<comment type="function">
    <text evidence="1">Reactivates suicidally inhibited ethanolamine ammonia-lyase (EAL), cyanocobalamin-inactivated EAL and O(2)-inactivated EAL; requires Mg(2+), ATP and adenosylcobalamin. Reactivation probably occurs by the ATP-dependent exchange of cobalamin.</text>
</comment>
<comment type="pathway">
    <text>Amine and polyamine degradation; ethanolamine degradation.</text>
</comment>
<comment type="subcellular location">
    <subcellularLocation>
        <location evidence="2">Bacterial microcompartment</location>
    </subcellularLocation>
</comment>
<comment type="disruption phenotype">
    <text evidence="1">Ethanolamine ammonia-lyase (eutB-eutC) is no longer reactivated.</text>
</comment>
<comment type="similarity">
    <text evidence="2">Belongs to the EutA family.</text>
</comment>
<comment type="caution">
    <text evidence="3">In strain MG1655 the eut operon is interrupted by the CPZ-55 prophage, encoding 9 genes situated between eutA and eutB, which are translated in the other direction. CPZ-55 may prevent expression of the eut operon in strain MG1655. Strain W3110 does not have this prophage element and should be able to express the operon.</text>
</comment>
<sequence>MNTRQLLSVGIDIGTTTTQVIFSRLELVNRAAVSQVPRYEFIKREISWQSPVFFTPVDKQGGLKEAELKTLILEQYHAAGIEPESVDSGAIIITGESAKTRNARPAVMALSQSLGDFVVASAGPHLESVIAGHGAGAQTLSEQRLCRVLNIDIGGGTANYALFDAGKISGTACLNVGGRLLETDSHGRVVYAHKPGQMIVDECFGAGTDARSLTGAQLVQVTRRMAELIVEVIDGTLSPLAQALMQTGLLPAGVTPEIITLSGGVGECYRHQPADPFCFADIGPLLATALHDHPRLREMNVQFPAQTVRATVIGAGAHTLSLSGSTIWLEGVQLPLRNLPVAIPIDETDLVGAWQQALIQLDLDPKTDAYVLALPASLPVRYAAVLTVINALVDFVARFPNPHPLLVVAGQDFGKALGMLLRPQLQQLPLAVIDEVIVRAGDYIDIGTPLFGGSVVPVTVKSLAFPS</sequence>
<evidence type="ECO:0000269" key="1">
    <source>
    </source>
</evidence>
<evidence type="ECO:0000305" key="2"/>
<evidence type="ECO:0000305" key="3">
    <source>
    </source>
</evidence>
<organism>
    <name type="scientific">Escherichia coli (strain K12)</name>
    <dbReference type="NCBI Taxonomy" id="83333"/>
    <lineage>
        <taxon>Bacteria</taxon>
        <taxon>Pseudomonadati</taxon>
        <taxon>Pseudomonadota</taxon>
        <taxon>Gammaproteobacteria</taxon>
        <taxon>Enterobacterales</taxon>
        <taxon>Enterobacteriaceae</taxon>
        <taxon>Escherichia</taxon>
    </lineage>
</organism>
<dbReference type="EMBL" id="U00096">
    <property type="protein sequence ID" value="AAC75504.1"/>
    <property type="molecule type" value="Genomic_DNA"/>
</dbReference>
<dbReference type="EMBL" id="AP009048">
    <property type="protein sequence ID" value="BAE76716.1"/>
    <property type="molecule type" value="Genomic_DNA"/>
</dbReference>
<dbReference type="PIR" id="B65020">
    <property type="entry name" value="B65020"/>
</dbReference>
<dbReference type="RefSeq" id="NP_416946.1">
    <property type="nucleotide sequence ID" value="NC_000913.3"/>
</dbReference>
<dbReference type="RefSeq" id="WP_001097542.1">
    <property type="nucleotide sequence ID" value="NZ_LN832404.1"/>
</dbReference>
<dbReference type="BioGRID" id="4260579">
    <property type="interactions" value="13"/>
</dbReference>
<dbReference type="BioGRID" id="851276">
    <property type="interactions" value="2"/>
</dbReference>
<dbReference type="DIP" id="DIP-9527N"/>
<dbReference type="FunCoup" id="P76551">
    <property type="interactions" value="74"/>
</dbReference>
<dbReference type="IntAct" id="P76551">
    <property type="interactions" value="5"/>
</dbReference>
<dbReference type="STRING" id="511145.b2451"/>
<dbReference type="PaxDb" id="511145-b2451"/>
<dbReference type="DNASU" id="946937"/>
<dbReference type="EnsemblBacteria" id="AAC75504">
    <property type="protein sequence ID" value="AAC75504"/>
    <property type="gene ID" value="b2451"/>
</dbReference>
<dbReference type="GeneID" id="946937"/>
<dbReference type="KEGG" id="ecj:JW2435"/>
<dbReference type="KEGG" id="eco:b2451"/>
<dbReference type="KEGG" id="ecoc:C3026_13605"/>
<dbReference type="PATRIC" id="fig|1411691.4.peg.4289"/>
<dbReference type="EchoBASE" id="EB3933"/>
<dbReference type="eggNOG" id="COG4819">
    <property type="taxonomic scope" value="Bacteria"/>
</dbReference>
<dbReference type="HOGENOM" id="CLU_046255_0_0_6"/>
<dbReference type="InParanoid" id="P76551"/>
<dbReference type="OMA" id="DTACFDI"/>
<dbReference type="OrthoDB" id="1542at2"/>
<dbReference type="PhylomeDB" id="P76551"/>
<dbReference type="BioCyc" id="EcoCyc:G7281-MONOMER"/>
<dbReference type="UniPathway" id="UPA00560"/>
<dbReference type="PRO" id="PR:P76551"/>
<dbReference type="Proteomes" id="UP000000625">
    <property type="component" value="Chromosome"/>
</dbReference>
<dbReference type="GO" id="GO:0031469">
    <property type="term" value="C:bacterial microcompartment"/>
    <property type="evidence" value="ECO:0007669"/>
    <property type="project" value="UniProtKB-SubCell"/>
</dbReference>
<dbReference type="GO" id="GO:0046336">
    <property type="term" value="P:ethanolamine catabolic process"/>
    <property type="evidence" value="ECO:0007669"/>
    <property type="project" value="UniProtKB-UniPathway"/>
</dbReference>
<dbReference type="GO" id="GO:0030091">
    <property type="term" value="P:protein repair"/>
    <property type="evidence" value="ECO:0000314"/>
    <property type="project" value="EcoCyc"/>
</dbReference>
<dbReference type="InterPro" id="IPR043129">
    <property type="entry name" value="ATPase_NBD"/>
</dbReference>
<dbReference type="InterPro" id="IPR009377">
    <property type="entry name" value="EutA"/>
</dbReference>
<dbReference type="InterPro" id="IPR050696">
    <property type="entry name" value="FtsA/MreB"/>
</dbReference>
<dbReference type="NCBIfam" id="NF007991">
    <property type="entry name" value="PRK10719.1-1"/>
    <property type="match status" value="1"/>
</dbReference>
<dbReference type="NCBIfam" id="NF007993">
    <property type="entry name" value="PRK10719.1-4"/>
    <property type="match status" value="1"/>
</dbReference>
<dbReference type="PANTHER" id="PTHR32432">
    <property type="entry name" value="CELL DIVISION PROTEIN FTSA-RELATED"/>
    <property type="match status" value="1"/>
</dbReference>
<dbReference type="PANTHER" id="PTHR32432:SF13">
    <property type="entry name" value="ETHANOLAMINE AMMONIA-LYASE REACTIVASE EUTA"/>
    <property type="match status" value="1"/>
</dbReference>
<dbReference type="Pfam" id="PF06277">
    <property type="entry name" value="EutA"/>
    <property type="match status" value="1"/>
</dbReference>
<dbReference type="PIRSF" id="PIRSF012293">
    <property type="entry name" value="EutA"/>
    <property type="match status" value="1"/>
</dbReference>
<dbReference type="SUPFAM" id="SSF53067">
    <property type="entry name" value="Actin-like ATPase domain"/>
    <property type="match status" value="1"/>
</dbReference>
<proteinExistence type="evidence at protein level"/>
<name>EUTA_ECOLI</name>
<reference key="1">
    <citation type="journal article" date="1997" name="Science">
        <title>The complete genome sequence of Escherichia coli K-12.</title>
        <authorList>
            <person name="Blattner F.R."/>
            <person name="Plunkett G. III"/>
            <person name="Bloch C.A."/>
            <person name="Perna N.T."/>
            <person name="Burland V."/>
            <person name="Riley M."/>
            <person name="Collado-Vides J."/>
            <person name="Glasner J.D."/>
            <person name="Rode C.K."/>
            <person name="Mayhew G.F."/>
            <person name="Gregor J."/>
            <person name="Davis N.W."/>
            <person name="Kirkpatrick H.A."/>
            <person name="Goeden M.A."/>
            <person name="Rose D.J."/>
            <person name="Mau B."/>
            <person name="Shao Y."/>
        </authorList>
    </citation>
    <scope>NUCLEOTIDE SEQUENCE [LARGE SCALE GENOMIC DNA]</scope>
    <source>
        <strain>K12 / MG1655 / ATCC 47076</strain>
    </source>
</reference>
<reference key="2">
    <citation type="journal article" date="2006" name="Mol. Syst. Biol.">
        <title>Highly accurate genome sequences of Escherichia coli K-12 strains MG1655 and W3110.</title>
        <authorList>
            <person name="Hayashi K."/>
            <person name="Morooka N."/>
            <person name="Yamamoto Y."/>
            <person name="Fujita K."/>
            <person name="Isono K."/>
            <person name="Choi S."/>
            <person name="Ohtsubo E."/>
            <person name="Baba T."/>
            <person name="Wanner B.L."/>
            <person name="Mori H."/>
            <person name="Horiuchi T."/>
        </authorList>
    </citation>
    <scope>NUCLEOTIDE SEQUENCE [LARGE SCALE GENOMIC DNA]</scope>
    <source>
        <strain>K12 / W3110 / ATCC 27325 / DSM 5911</strain>
    </source>
</reference>
<reference key="3">
    <citation type="journal article" date="2004" name="J. Bacteriol.">
        <title>Identification of a reactivating factor for adenosylcobalamin-dependent ethanolamine ammonia lyase.</title>
        <authorList>
            <person name="Mori K."/>
            <person name="Bando R."/>
            <person name="Hieda N."/>
            <person name="Toraya T."/>
        </authorList>
    </citation>
    <scope>PROTEIN SEQUENCE OF 1-6</scope>
    <scope>FUNCTION</scope>
    <scope>DISRUPTION PHENOTYPE</scope>
    <source>
        <strain>K12 / JM109 / ATCC 53323</strain>
        <strain>K12 / W3110 / ATCC 27325 / DSM 5911</strain>
    </source>
</reference>
<protein>
    <recommendedName>
        <fullName evidence="2">Ethanolamine ammonia-lyase reactivase EutA</fullName>
    </recommendedName>
</protein>
<feature type="chain" id="PRO_0000087079" description="Ethanolamine ammonia-lyase reactivase EutA">
    <location>
        <begin position="1"/>
        <end position="467"/>
    </location>
</feature>
<keyword id="KW-1283">Bacterial microcompartment</keyword>
<keyword id="KW-0143">Chaperone</keyword>
<keyword id="KW-0903">Direct protein sequencing</keyword>
<keyword id="KW-1185">Reference proteome</keyword>
<gene>
    <name type="primary">eutA</name>
    <name type="synonym">yffT</name>
    <name type="ordered locus">b2451</name>
    <name type="ordered locus">JW2435</name>
</gene>
<accession>P76551</accession>
<accession>Q2MAJ0</accession>